<protein>
    <recommendedName>
        <fullName evidence="2">Small ribosomal subunit protein uS12</fullName>
    </recommendedName>
    <alternativeName>
        <fullName evidence="4">30S ribosomal protein S12</fullName>
    </alternativeName>
</protein>
<organism>
    <name type="scientific">Staphylococcus aureus (strain Newman)</name>
    <dbReference type="NCBI Taxonomy" id="426430"/>
    <lineage>
        <taxon>Bacteria</taxon>
        <taxon>Bacillati</taxon>
        <taxon>Bacillota</taxon>
        <taxon>Bacilli</taxon>
        <taxon>Bacillales</taxon>
        <taxon>Staphylococcaceae</taxon>
        <taxon>Staphylococcus</taxon>
    </lineage>
</organism>
<sequence>MPTINQLVRKPRQSKIKKSDSPALNKGFNSKKKKFTDLNSPQKRGVCTRVGTMTPKKPNSALRKYARVRLSNNIEINAYIPGIGHNLQEHSVVLVRGGRVKDLPGVRYHIVRGALDTSGVDGRRQGRSLYGTKKPKN</sequence>
<name>RS12_STAAE</name>
<keyword id="KW-0488">Methylation</keyword>
<keyword id="KW-0687">Ribonucleoprotein</keyword>
<keyword id="KW-0689">Ribosomal protein</keyword>
<keyword id="KW-0694">RNA-binding</keyword>
<keyword id="KW-0699">rRNA-binding</keyword>
<keyword id="KW-0820">tRNA-binding</keyword>
<feature type="chain" id="PRO_1000072260" description="Small ribosomal subunit protein uS12">
    <location>
        <begin position="1"/>
        <end position="137"/>
    </location>
</feature>
<feature type="region of interest" description="Disordered" evidence="3">
    <location>
        <begin position="1"/>
        <end position="55"/>
    </location>
</feature>
<feature type="region of interest" description="Disordered" evidence="3">
    <location>
        <begin position="118"/>
        <end position="137"/>
    </location>
</feature>
<feature type="modified residue" description="3-methylthioaspartic acid" evidence="1">
    <location>
        <position position="102"/>
    </location>
</feature>
<evidence type="ECO:0000250" key="1"/>
<evidence type="ECO:0000255" key="2">
    <source>
        <dbReference type="HAMAP-Rule" id="MF_00403"/>
    </source>
</evidence>
<evidence type="ECO:0000256" key="3">
    <source>
        <dbReference type="SAM" id="MobiDB-lite"/>
    </source>
</evidence>
<evidence type="ECO:0000305" key="4"/>
<dbReference type="EMBL" id="AP009351">
    <property type="protein sequence ID" value="BAF66779.1"/>
    <property type="molecule type" value="Genomic_DNA"/>
</dbReference>
<dbReference type="RefSeq" id="WP_001142337.1">
    <property type="nucleotide sequence ID" value="NZ_JBBIAE010000002.1"/>
</dbReference>
<dbReference type="SMR" id="A6QEJ7"/>
<dbReference type="GeneID" id="98344879"/>
<dbReference type="KEGG" id="sae:NWMN_0507"/>
<dbReference type="HOGENOM" id="CLU_104295_1_2_9"/>
<dbReference type="Proteomes" id="UP000006386">
    <property type="component" value="Chromosome"/>
</dbReference>
<dbReference type="GO" id="GO:0015935">
    <property type="term" value="C:small ribosomal subunit"/>
    <property type="evidence" value="ECO:0007669"/>
    <property type="project" value="InterPro"/>
</dbReference>
<dbReference type="GO" id="GO:0019843">
    <property type="term" value="F:rRNA binding"/>
    <property type="evidence" value="ECO:0007669"/>
    <property type="project" value="UniProtKB-UniRule"/>
</dbReference>
<dbReference type="GO" id="GO:0003735">
    <property type="term" value="F:structural constituent of ribosome"/>
    <property type="evidence" value="ECO:0007669"/>
    <property type="project" value="InterPro"/>
</dbReference>
<dbReference type="GO" id="GO:0000049">
    <property type="term" value="F:tRNA binding"/>
    <property type="evidence" value="ECO:0007669"/>
    <property type="project" value="UniProtKB-UniRule"/>
</dbReference>
<dbReference type="GO" id="GO:0006412">
    <property type="term" value="P:translation"/>
    <property type="evidence" value="ECO:0007669"/>
    <property type="project" value="UniProtKB-UniRule"/>
</dbReference>
<dbReference type="CDD" id="cd03368">
    <property type="entry name" value="Ribosomal_S12"/>
    <property type="match status" value="1"/>
</dbReference>
<dbReference type="FunFam" id="2.40.50.140:FF:000001">
    <property type="entry name" value="30S ribosomal protein S12"/>
    <property type="match status" value="1"/>
</dbReference>
<dbReference type="Gene3D" id="2.40.50.140">
    <property type="entry name" value="Nucleic acid-binding proteins"/>
    <property type="match status" value="1"/>
</dbReference>
<dbReference type="HAMAP" id="MF_00403_B">
    <property type="entry name" value="Ribosomal_uS12_B"/>
    <property type="match status" value="1"/>
</dbReference>
<dbReference type="InterPro" id="IPR012340">
    <property type="entry name" value="NA-bd_OB-fold"/>
</dbReference>
<dbReference type="InterPro" id="IPR006032">
    <property type="entry name" value="Ribosomal_uS12"/>
</dbReference>
<dbReference type="InterPro" id="IPR005679">
    <property type="entry name" value="Ribosomal_uS12_bac"/>
</dbReference>
<dbReference type="NCBIfam" id="TIGR00981">
    <property type="entry name" value="rpsL_bact"/>
    <property type="match status" value="1"/>
</dbReference>
<dbReference type="PANTHER" id="PTHR11652">
    <property type="entry name" value="30S RIBOSOMAL PROTEIN S12 FAMILY MEMBER"/>
    <property type="match status" value="1"/>
</dbReference>
<dbReference type="Pfam" id="PF00164">
    <property type="entry name" value="Ribosom_S12_S23"/>
    <property type="match status" value="1"/>
</dbReference>
<dbReference type="PIRSF" id="PIRSF002133">
    <property type="entry name" value="Ribosomal_S12/S23"/>
    <property type="match status" value="1"/>
</dbReference>
<dbReference type="PRINTS" id="PR01034">
    <property type="entry name" value="RIBOSOMALS12"/>
</dbReference>
<dbReference type="SUPFAM" id="SSF50249">
    <property type="entry name" value="Nucleic acid-binding proteins"/>
    <property type="match status" value="1"/>
</dbReference>
<dbReference type="PROSITE" id="PS00055">
    <property type="entry name" value="RIBOSOMAL_S12"/>
    <property type="match status" value="1"/>
</dbReference>
<reference key="1">
    <citation type="journal article" date="2008" name="J. Bacteriol.">
        <title>Genome sequence of Staphylococcus aureus strain Newman and comparative analysis of staphylococcal genomes: polymorphism and evolution of two major pathogenicity islands.</title>
        <authorList>
            <person name="Baba T."/>
            <person name="Bae T."/>
            <person name="Schneewind O."/>
            <person name="Takeuchi F."/>
            <person name="Hiramatsu K."/>
        </authorList>
    </citation>
    <scope>NUCLEOTIDE SEQUENCE [LARGE SCALE GENOMIC DNA]</scope>
    <source>
        <strain>Newman</strain>
    </source>
</reference>
<proteinExistence type="inferred from homology"/>
<comment type="function">
    <text evidence="2">With S4 and S5 plays an important role in translational accuracy.</text>
</comment>
<comment type="function">
    <text evidence="2">Interacts with and stabilizes bases of the 16S rRNA that are involved in tRNA selection in the A site and with the mRNA backbone. Located at the interface of the 30S and 50S subunits, it traverses the body of the 30S subunit contacting proteins on the other side and probably holding the rRNA structure together. The combined cluster of proteins S8, S12 and S17 appears to hold together the shoulder and platform of the 30S subunit.</text>
</comment>
<comment type="subunit">
    <text evidence="2">Part of the 30S ribosomal subunit. Contacts proteins S8 and S17. May interact with IF1 in the 30S initiation complex.</text>
</comment>
<comment type="similarity">
    <text evidence="2">Belongs to the universal ribosomal protein uS12 family.</text>
</comment>
<accession>A6QEJ7</accession>
<gene>
    <name evidence="2" type="primary">rpsL</name>
    <name type="ordered locus">NWMN_0507</name>
</gene>